<keyword id="KW-0067">ATP-binding</keyword>
<keyword id="KW-0436">Ligase</keyword>
<keyword id="KW-0547">Nucleotide-binding</keyword>
<proteinExistence type="inferred from homology"/>
<feature type="chain" id="PRO_1000148220" description="Putative glutamate--cysteine ligase 2">
    <location>
        <begin position="1"/>
        <end position="372"/>
    </location>
</feature>
<sequence>MPMPDFQVSEPFTLGIELEMQVVNPPGYDLSQDSSTLIDAVKNQITAGEVKHDITESMLELATDVCRDINQAAGQFSAMQKVVLQAAADHHLEICGGGTHPFQKWQRQEVCDNERYQRTLENFGYLIQQATVFGQHVHVGCASGDDAIYLLHGLSRFVPHFIALSAASPYMQGTDTRFASSRPNIFSAFPDNGPMPWVSNWQQFETLFRCLSYTKMIDSIKDLHWDIRPSPHFGTVEVRVMDTPLTLSHAVNMAGLIQATAHWLLTERPFKHQEKDYLLYKFNRFQACRYGLEGVITDPHTGDRRPLTEDTLRLLEKIAPSADKIGASSAIEALHRQVVSGLNEAQLMRDFVADGGSLIGLVKKHCEIWAGE</sequence>
<name>GCS2_ESCF3</name>
<gene>
    <name type="primary">ybdK</name>
    <name type="ordered locus">EFER_2528</name>
</gene>
<organism>
    <name type="scientific">Escherichia fergusonii (strain ATCC 35469 / DSM 13698 / CCUG 18766 / IAM 14443 / JCM 21226 / LMG 7866 / NBRC 102419 / NCTC 12128 / CDC 0568-73)</name>
    <dbReference type="NCBI Taxonomy" id="585054"/>
    <lineage>
        <taxon>Bacteria</taxon>
        <taxon>Pseudomonadati</taxon>
        <taxon>Pseudomonadota</taxon>
        <taxon>Gammaproteobacteria</taxon>
        <taxon>Enterobacterales</taxon>
        <taxon>Enterobacteriaceae</taxon>
        <taxon>Escherichia</taxon>
    </lineage>
</organism>
<dbReference type="EC" id="6.3.2.2" evidence="1"/>
<dbReference type="EMBL" id="CU928158">
    <property type="protein sequence ID" value="CAQ90024.1"/>
    <property type="molecule type" value="Genomic_DNA"/>
</dbReference>
<dbReference type="RefSeq" id="WP_001132171.1">
    <property type="nucleotide sequence ID" value="NC_011740.1"/>
</dbReference>
<dbReference type="SMR" id="B7LLN2"/>
<dbReference type="GeneID" id="75056440"/>
<dbReference type="KEGG" id="efe:EFER_2528"/>
<dbReference type="HOGENOM" id="CLU_044848_1_1_6"/>
<dbReference type="OrthoDB" id="9769628at2"/>
<dbReference type="Proteomes" id="UP000000745">
    <property type="component" value="Chromosome"/>
</dbReference>
<dbReference type="GO" id="GO:0005524">
    <property type="term" value="F:ATP binding"/>
    <property type="evidence" value="ECO:0007669"/>
    <property type="project" value="UniProtKB-KW"/>
</dbReference>
<dbReference type="GO" id="GO:0004357">
    <property type="term" value="F:glutamate-cysteine ligase activity"/>
    <property type="evidence" value="ECO:0007669"/>
    <property type="project" value="UniProtKB-EC"/>
</dbReference>
<dbReference type="GO" id="GO:0042398">
    <property type="term" value="P:modified amino acid biosynthetic process"/>
    <property type="evidence" value="ECO:0007669"/>
    <property type="project" value="InterPro"/>
</dbReference>
<dbReference type="FunFam" id="3.30.590.20:FF:000002">
    <property type="entry name" value="Putative glutamate--cysteine ligase 2"/>
    <property type="match status" value="1"/>
</dbReference>
<dbReference type="Gene3D" id="3.30.590.20">
    <property type="match status" value="1"/>
</dbReference>
<dbReference type="HAMAP" id="MF_01609">
    <property type="entry name" value="Glu_cys_ligase_2"/>
    <property type="match status" value="1"/>
</dbReference>
<dbReference type="InterPro" id="IPR050141">
    <property type="entry name" value="GCL_type2/YbdK_subfam"/>
</dbReference>
<dbReference type="InterPro" id="IPR006336">
    <property type="entry name" value="GCS2"/>
</dbReference>
<dbReference type="InterPro" id="IPR014746">
    <property type="entry name" value="Gln_synth/guanido_kin_cat_dom"/>
</dbReference>
<dbReference type="InterPro" id="IPR011793">
    <property type="entry name" value="YbdK"/>
</dbReference>
<dbReference type="NCBIfam" id="TIGR02050">
    <property type="entry name" value="gshA_cyan_rel"/>
    <property type="match status" value="1"/>
</dbReference>
<dbReference type="NCBIfam" id="NF010040">
    <property type="entry name" value="PRK13516.1"/>
    <property type="match status" value="1"/>
</dbReference>
<dbReference type="PANTHER" id="PTHR36510">
    <property type="entry name" value="GLUTAMATE--CYSTEINE LIGASE 2-RELATED"/>
    <property type="match status" value="1"/>
</dbReference>
<dbReference type="PANTHER" id="PTHR36510:SF1">
    <property type="entry name" value="GLUTAMATE--CYSTEINE LIGASE 2-RELATED"/>
    <property type="match status" value="1"/>
</dbReference>
<dbReference type="Pfam" id="PF04107">
    <property type="entry name" value="GCS2"/>
    <property type="match status" value="1"/>
</dbReference>
<dbReference type="SUPFAM" id="SSF55931">
    <property type="entry name" value="Glutamine synthetase/guanido kinase"/>
    <property type="match status" value="1"/>
</dbReference>
<comment type="function">
    <text evidence="1">ATP-dependent carboxylate-amine ligase which exhibits weak glutamate--cysteine ligase activity.</text>
</comment>
<comment type="catalytic activity">
    <reaction evidence="1">
        <text>L-cysteine + L-glutamate + ATP = gamma-L-glutamyl-L-cysteine + ADP + phosphate + H(+)</text>
        <dbReference type="Rhea" id="RHEA:13285"/>
        <dbReference type="ChEBI" id="CHEBI:15378"/>
        <dbReference type="ChEBI" id="CHEBI:29985"/>
        <dbReference type="ChEBI" id="CHEBI:30616"/>
        <dbReference type="ChEBI" id="CHEBI:35235"/>
        <dbReference type="ChEBI" id="CHEBI:43474"/>
        <dbReference type="ChEBI" id="CHEBI:58173"/>
        <dbReference type="ChEBI" id="CHEBI:456216"/>
        <dbReference type="EC" id="6.3.2.2"/>
    </reaction>
</comment>
<comment type="subunit">
    <text evidence="1">Homodimer.</text>
</comment>
<comment type="similarity">
    <text evidence="1">Belongs to the glutamate--cysteine ligase type 2 family. YbdK subfamily.</text>
</comment>
<evidence type="ECO:0000255" key="1">
    <source>
        <dbReference type="HAMAP-Rule" id="MF_01609"/>
    </source>
</evidence>
<accession>B7LLN2</accession>
<protein>
    <recommendedName>
        <fullName evidence="1">Putative glutamate--cysteine ligase 2</fullName>
        <ecNumber evidence="1">6.3.2.2</ecNumber>
    </recommendedName>
    <alternativeName>
        <fullName evidence="1">Gamma-glutamylcysteine synthetase 2</fullName>
        <shortName evidence="1">GCS 2</shortName>
        <shortName evidence="1">Gamma-GCS 2</shortName>
    </alternativeName>
</protein>
<reference key="1">
    <citation type="journal article" date="2009" name="PLoS Genet.">
        <title>Organised genome dynamics in the Escherichia coli species results in highly diverse adaptive paths.</title>
        <authorList>
            <person name="Touchon M."/>
            <person name="Hoede C."/>
            <person name="Tenaillon O."/>
            <person name="Barbe V."/>
            <person name="Baeriswyl S."/>
            <person name="Bidet P."/>
            <person name="Bingen E."/>
            <person name="Bonacorsi S."/>
            <person name="Bouchier C."/>
            <person name="Bouvet O."/>
            <person name="Calteau A."/>
            <person name="Chiapello H."/>
            <person name="Clermont O."/>
            <person name="Cruveiller S."/>
            <person name="Danchin A."/>
            <person name="Diard M."/>
            <person name="Dossat C."/>
            <person name="Karoui M.E."/>
            <person name="Frapy E."/>
            <person name="Garry L."/>
            <person name="Ghigo J.M."/>
            <person name="Gilles A.M."/>
            <person name="Johnson J."/>
            <person name="Le Bouguenec C."/>
            <person name="Lescat M."/>
            <person name="Mangenot S."/>
            <person name="Martinez-Jehanne V."/>
            <person name="Matic I."/>
            <person name="Nassif X."/>
            <person name="Oztas S."/>
            <person name="Petit M.A."/>
            <person name="Pichon C."/>
            <person name="Rouy Z."/>
            <person name="Ruf C.S."/>
            <person name="Schneider D."/>
            <person name="Tourret J."/>
            <person name="Vacherie B."/>
            <person name="Vallenet D."/>
            <person name="Medigue C."/>
            <person name="Rocha E.P.C."/>
            <person name="Denamur E."/>
        </authorList>
    </citation>
    <scope>NUCLEOTIDE SEQUENCE [LARGE SCALE GENOMIC DNA]</scope>
    <source>
        <strain>ATCC 35469 / DSM 13698 / BCRC 15582 / CCUG 18766 / IAM 14443 / JCM 21226 / LMG 7866 / NBRC 102419 / NCTC 12128 / CDC 0568-73</strain>
    </source>
</reference>